<evidence type="ECO:0000255" key="1">
    <source>
        <dbReference type="HAMAP-Rule" id="MF_01974"/>
    </source>
</evidence>
<evidence type="ECO:0000305" key="2"/>
<name>MAP1_CLOPE</name>
<keyword id="KW-0031">Aminopeptidase</keyword>
<keyword id="KW-0378">Hydrolase</keyword>
<keyword id="KW-0479">Metal-binding</keyword>
<keyword id="KW-0645">Protease</keyword>
<keyword id="KW-1185">Reference proteome</keyword>
<comment type="function">
    <text evidence="1">Removes the N-terminal methionine from nascent proteins. The N-terminal methionine is often cleaved when the second residue in the primary sequence is small and uncharged (Met-Ala-, Cys, Gly, Pro, Ser, Thr, or Val). Requires deformylation of the N(alpha)-formylated initiator methionine before it can be hydrolyzed.</text>
</comment>
<comment type="catalytic activity">
    <reaction evidence="1">
        <text>Release of N-terminal amino acids, preferentially methionine, from peptides and arylamides.</text>
        <dbReference type="EC" id="3.4.11.18"/>
    </reaction>
</comment>
<comment type="cofactor">
    <cofactor evidence="1">
        <name>Co(2+)</name>
        <dbReference type="ChEBI" id="CHEBI:48828"/>
    </cofactor>
    <cofactor evidence="1">
        <name>Zn(2+)</name>
        <dbReference type="ChEBI" id="CHEBI:29105"/>
    </cofactor>
    <cofactor evidence="1">
        <name>Mn(2+)</name>
        <dbReference type="ChEBI" id="CHEBI:29035"/>
    </cofactor>
    <cofactor evidence="1">
        <name>Fe(2+)</name>
        <dbReference type="ChEBI" id="CHEBI:29033"/>
    </cofactor>
    <text evidence="1">Binds 2 divalent metal cations per subunit. Has a high-affinity and a low affinity metal-binding site. The true nature of the physiological cofactor is under debate. The enzyme is active with cobalt, zinc, manganese or divalent iron ions. Most likely, methionine aminopeptidases function as mononuclear Fe(2+)-metalloproteases under physiological conditions, and the catalytically relevant metal-binding site has been assigned to the histidine-containing high-affinity site.</text>
</comment>
<comment type="subunit">
    <text evidence="1">Monomer.</text>
</comment>
<comment type="similarity">
    <text evidence="1">Belongs to the peptidase M24A family. Methionine aminopeptidase type 1 subfamily.</text>
</comment>
<sequence>MIILKNENEIDLMRKAGKILGETLNLLKEKVRPGITTTELDRIAEEFITKHGATPSFKGLYGFPASLCISVNNQVIHGFPGSYELKDGDIVSIDCGVCLNGFHSDAARTFGVGNISEEAEKLIRITEESFFKGIEKAYVDNRLTDISNEIQQYVEANGFSVVRDFVGHGIGRKVHEDPEVPNFGRPGRGPKLMAGMVLAIEPMVNMGSYRVKTLDDGWTVVTADGKLSAHYENTVAILPNGPEILTLIK</sequence>
<dbReference type="EC" id="3.4.11.18" evidence="1"/>
<dbReference type="EMBL" id="BA000016">
    <property type="protein sequence ID" value="BAB82089.1"/>
    <property type="molecule type" value="Genomic_DNA"/>
</dbReference>
<dbReference type="EMBL" id="X86486">
    <property type="protein sequence ID" value="CAA60211.1"/>
    <property type="molecule type" value="Genomic_DNA"/>
</dbReference>
<dbReference type="RefSeq" id="WP_003454388.1">
    <property type="nucleotide sequence ID" value="NC_003366.1"/>
</dbReference>
<dbReference type="SMR" id="P50614"/>
<dbReference type="STRING" id="195102.gene:10491700"/>
<dbReference type="GeneID" id="93001031"/>
<dbReference type="KEGG" id="cpe:CPE2383"/>
<dbReference type="HOGENOM" id="CLU_015857_0_1_9"/>
<dbReference type="Proteomes" id="UP000000818">
    <property type="component" value="Chromosome"/>
</dbReference>
<dbReference type="GO" id="GO:0005829">
    <property type="term" value="C:cytosol"/>
    <property type="evidence" value="ECO:0007669"/>
    <property type="project" value="TreeGrafter"/>
</dbReference>
<dbReference type="GO" id="GO:0004239">
    <property type="term" value="F:initiator methionyl aminopeptidase activity"/>
    <property type="evidence" value="ECO:0007669"/>
    <property type="project" value="UniProtKB-UniRule"/>
</dbReference>
<dbReference type="GO" id="GO:0046872">
    <property type="term" value="F:metal ion binding"/>
    <property type="evidence" value="ECO:0007669"/>
    <property type="project" value="UniProtKB-UniRule"/>
</dbReference>
<dbReference type="GO" id="GO:0070006">
    <property type="term" value="F:metalloaminopeptidase activity"/>
    <property type="evidence" value="ECO:0007669"/>
    <property type="project" value="UniProtKB-UniRule"/>
</dbReference>
<dbReference type="GO" id="GO:0006508">
    <property type="term" value="P:proteolysis"/>
    <property type="evidence" value="ECO:0007669"/>
    <property type="project" value="UniProtKB-KW"/>
</dbReference>
<dbReference type="CDD" id="cd01086">
    <property type="entry name" value="MetAP1"/>
    <property type="match status" value="1"/>
</dbReference>
<dbReference type="Gene3D" id="3.90.230.10">
    <property type="entry name" value="Creatinase/methionine aminopeptidase superfamily"/>
    <property type="match status" value="1"/>
</dbReference>
<dbReference type="HAMAP" id="MF_01974">
    <property type="entry name" value="MetAP_1"/>
    <property type="match status" value="1"/>
</dbReference>
<dbReference type="InterPro" id="IPR036005">
    <property type="entry name" value="Creatinase/aminopeptidase-like"/>
</dbReference>
<dbReference type="InterPro" id="IPR000994">
    <property type="entry name" value="Pept_M24"/>
</dbReference>
<dbReference type="InterPro" id="IPR001714">
    <property type="entry name" value="Pept_M24_MAP"/>
</dbReference>
<dbReference type="InterPro" id="IPR002467">
    <property type="entry name" value="Pept_M24A_MAP1"/>
</dbReference>
<dbReference type="NCBIfam" id="TIGR00500">
    <property type="entry name" value="met_pdase_I"/>
    <property type="match status" value="1"/>
</dbReference>
<dbReference type="PANTHER" id="PTHR43330">
    <property type="entry name" value="METHIONINE AMINOPEPTIDASE"/>
    <property type="match status" value="1"/>
</dbReference>
<dbReference type="PANTHER" id="PTHR43330:SF27">
    <property type="entry name" value="METHIONINE AMINOPEPTIDASE"/>
    <property type="match status" value="1"/>
</dbReference>
<dbReference type="Pfam" id="PF00557">
    <property type="entry name" value="Peptidase_M24"/>
    <property type="match status" value="1"/>
</dbReference>
<dbReference type="PRINTS" id="PR00599">
    <property type="entry name" value="MAPEPTIDASE"/>
</dbReference>
<dbReference type="SUPFAM" id="SSF55920">
    <property type="entry name" value="Creatinase/aminopeptidase"/>
    <property type="match status" value="1"/>
</dbReference>
<dbReference type="PROSITE" id="PS00680">
    <property type="entry name" value="MAP_1"/>
    <property type="match status" value="1"/>
</dbReference>
<protein>
    <recommendedName>
        <fullName evidence="1">Methionine aminopeptidase</fullName>
        <shortName evidence="1">MAP</shortName>
        <shortName evidence="1">MetAP</shortName>
        <ecNumber evidence="1">3.4.11.18</ecNumber>
    </recommendedName>
    <alternativeName>
        <fullName evidence="1">Peptidase M</fullName>
    </alternativeName>
</protein>
<proteinExistence type="inferred from homology"/>
<feature type="chain" id="PRO_0000148936" description="Methionine aminopeptidase">
    <location>
        <begin position="1"/>
        <end position="249"/>
    </location>
</feature>
<feature type="binding site" evidence="1">
    <location>
        <position position="77"/>
    </location>
    <ligand>
        <name>substrate</name>
    </ligand>
</feature>
<feature type="binding site" evidence="1">
    <location>
        <position position="94"/>
    </location>
    <ligand>
        <name>a divalent metal cation</name>
        <dbReference type="ChEBI" id="CHEBI:60240"/>
        <label>1</label>
    </ligand>
</feature>
<feature type="binding site" evidence="1">
    <location>
        <position position="105"/>
    </location>
    <ligand>
        <name>a divalent metal cation</name>
        <dbReference type="ChEBI" id="CHEBI:60240"/>
        <label>1</label>
    </ligand>
</feature>
<feature type="binding site" evidence="1">
    <location>
        <position position="105"/>
    </location>
    <ligand>
        <name>a divalent metal cation</name>
        <dbReference type="ChEBI" id="CHEBI:60240"/>
        <label>2</label>
        <note>catalytic</note>
    </ligand>
</feature>
<feature type="binding site" evidence="1">
    <location>
        <position position="168"/>
    </location>
    <ligand>
        <name>a divalent metal cation</name>
        <dbReference type="ChEBI" id="CHEBI:60240"/>
        <label>2</label>
        <note>catalytic</note>
    </ligand>
</feature>
<feature type="binding site" evidence="1">
    <location>
        <position position="175"/>
    </location>
    <ligand>
        <name>substrate</name>
    </ligand>
</feature>
<feature type="binding site" evidence="1">
    <location>
        <position position="201"/>
    </location>
    <ligand>
        <name>a divalent metal cation</name>
        <dbReference type="ChEBI" id="CHEBI:60240"/>
        <label>2</label>
        <note>catalytic</note>
    </ligand>
</feature>
<feature type="binding site" evidence="1">
    <location>
        <position position="232"/>
    </location>
    <ligand>
        <name>a divalent metal cation</name>
        <dbReference type="ChEBI" id="CHEBI:60240"/>
        <label>1</label>
    </ligand>
</feature>
<feature type="binding site" evidence="1">
    <location>
        <position position="232"/>
    </location>
    <ligand>
        <name>a divalent metal cation</name>
        <dbReference type="ChEBI" id="CHEBI:60240"/>
        <label>2</label>
        <note>catalytic</note>
    </ligand>
</feature>
<feature type="sequence conflict" description="In Ref. 2; CAA60211." evidence="2" ref="2">
    <original>K</original>
    <variation>Q</variation>
    <location>
        <position position="30"/>
    </location>
</feature>
<feature type="sequence conflict" description="In Ref. 2; CAA60211." evidence="2" ref="2">
    <original>S</original>
    <variation>R</variation>
    <location>
        <position position="104"/>
    </location>
</feature>
<feature type="sequence conflict" description="In Ref. 2; CAA60211." evidence="2" ref="2">
    <original>N</original>
    <variation>K</variation>
    <location>
        <position position="148"/>
    </location>
</feature>
<reference key="1">
    <citation type="journal article" date="2002" name="Proc. Natl. Acad. Sci. U.S.A.">
        <title>Complete genome sequence of Clostridium perfringens, an anaerobic flesh-eater.</title>
        <authorList>
            <person name="Shimizu T."/>
            <person name="Ohtani K."/>
            <person name="Hirakawa H."/>
            <person name="Ohshima K."/>
            <person name="Yamashita A."/>
            <person name="Shiba T."/>
            <person name="Ogasawara N."/>
            <person name="Hattori M."/>
            <person name="Kuhara S."/>
            <person name="Hayashi H."/>
        </authorList>
    </citation>
    <scope>NUCLEOTIDE SEQUENCE [LARGE SCALE GENOMIC DNA]</scope>
    <source>
        <strain>13 / Type A</strain>
    </source>
</reference>
<reference key="2">
    <citation type="journal article" date="1995" name="J. Bacteriol.">
        <title>Rapid expansion of the physical and genetic map of the chromosome of Clostridium perfringens CPN50.</title>
        <authorList>
            <person name="Katayama S."/>
            <person name="Dupuy B."/>
            <person name="Garnier T."/>
            <person name="Cole S.T."/>
        </authorList>
    </citation>
    <scope>NUCLEOTIDE SEQUENCE [GENOMIC DNA] OF 6-148</scope>
    <source>
        <strain>CPN50</strain>
    </source>
</reference>
<accession>P50614</accession>
<gene>
    <name evidence="1" type="primary">map</name>
    <name type="ordered locus">CPE2383</name>
</gene>
<organism>
    <name type="scientific">Clostridium perfringens (strain 13 / Type A)</name>
    <dbReference type="NCBI Taxonomy" id="195102"/>
    <lineage>
        <taxon>Bacteria</taxon>
        <taxon>Bacillati</taxon>
        <taxon>Bacillota</taxon>
        <taxon>Clostridia</taxon>
        <taxon>Eubacteriales</taxon>
        <taxon>Clostridiaceae</taxon>
        <taxon>Clostridium</taxon>
    </lineage>
</organism>